<keyword id="KW-0997">Cell inner membrane</keyword>
<keyword id="KW-1003">Cell membrane</keyword>
<keyword id="KW-0441">Lipid A biosynthesis</keyword>
<keyword id="KW-0444">Lipid biosynthesis</keyword>
<keyword id="KW-0443">Lipid metabolism</keyword>
<keyword id="KW-0448">Lipopolysaccharide biosynthesis</keyword>
<keyword id="KW-0472">Membrane</keyword>
<keyword id="KW-0812">Transmembrane</keyword>
<keyword id="KW-1133">Transmembrane helix</keyword>
<keyword id="KW-0813">Transport</keyword>
<organism>
    <name type="scientific">Salmonella dublin (strain CT_02021853)</name>
    <dbReference type="NCBI Taxonomy" id="439851"/>
    <lineage>
        <taxon>Bacteria</taxon>
        <taxon>Pseudomonadati</taxon>
        <taxon>Pseudomonadota</taxon>
        <taxon>Gammaproteobacteria</taxon>
        <taxon>Enterobacterales</taxon>
        <taxon>Enterobacteriaceae</taxon>
        <taxon>Salmonella</taxon>
    </lineage>
</organism>
<gene>
    <name evidence="1" type="primary">arnF</name>
    <name type="ordered locus">SeD_A2647</name>
</gene>
<feature type="chain" id="PRO_1000128665" description="Probable 4-amino-4-deoxy-L-arabinose-phosphoundecaprenol flippase subunit ArnF">
    <location>
        <begin position="1"/>
        <end position="125"/>
    </location>
</feature>
<feature type="topological domain" description="Cytoplasmic" evidence="1">
    <location>
        <begin position="1"/>
        <end position="2"/>
    </location>
</feature>
<feature type="transmembrane region" description="Helical" evidence="1">
    <location>
        <begin position="3"/>
        <end position="23"/>
    </location>
</feature>
<feature type="topological domain" description="Periplasmic" evidence="1">
    <location>
        <begin position="24"/>
        <end position="33"/>
    </location>
</feature>
<feature type="transmembrane region" description="Helical" evidence="1">
    <location>
        <begin position="34"/>
        <end position="54"/>
    </location>
</feature>
<feature type="topological domain" description="Cytoplasmic" evidence="1">
    <location>
        <begin position="55"/>
        <end position="76"/>
    </location>
</feature>
<feature type="transmembrane region" description="Helical" evidence="1">
    <location>
        <begin position="77"/>
        <end position="97"/>
    </location>
</feature>
<feature type="topological domain" description="Periplasmic" evidence="1">
    <location>
        <begin position="98"/>
        <end position="100"/>
    </location>
</feature>
<feature type="transmembrane region" description="Helical" evidence="1">
    <location>
        <begin position="101"/>
        <end position="121"/>
    </location>
</feature>
<feature type="topological domain" description="Cytoplasmic" evidence="1">
    <location>
        <begin position="122"/>
        <end position="125"/>
    </location>
</feature>
<protein>
    <recommendedName>
        <fullName evidence="1">Probable 4-amino-4-deoxy-L-arabinose-phosphoundecaprenol flippase subunit ArnF</fullName>
        <shortName evidence="1">L-Ara4N-phosphoundecaprenol flippase subunit ArnF</shortName>
    </recommendedName>
    <alternativeName>
        <fullName evidence="1">Undecaprenyl phosphate-aminoarabinose flippase subunit ArnF</fullName>
    </alternativeName>
</protein>
<evidence type="ECO:0000255" key="1">
    <source>
        <dbReference type="HAMAP-Rule" id="MF_00538"/>
    </source>
</evidence>
<proteinExistence type="inferred from homology"/>
<sequence length="125" mass="13096">MGVMWGLISVAIASLAQLSLGFAMMRLPSIAHPLAFISGLGALNAATLALFAGLAGYLVSVFCWHKTLHTLALSKAYALLSLSYVLVWVASMLLPGLQGAFSLKAMLGVLCIMAGVMLIFLPARS</sequence>
<comment type="function">
    <text evidence="1">Translocates 4-amino-4-deoxy-L-arabinose-phosphoundecaprenol (alpha-L-Ara4N-phosphoundecaprenol) from the cytoplasmic to the periplasmic side of the inner membrane.</text>
</comment>
<comment type="pathway">
    <text evidence="1">Bacterial outer membrane biogenesis; lipopolysaccharide biosynthesis.</text>
</comment>
<comment type="subunit">
    <text evidence="1">Heterodimer of ArnE and ArnF.</text>
</comment>
<comment type="subcellular location">
    <subcellularLocation>
        <location evidence="1">Cell inner membrane</location>
        <topology evidence="1">Multi-pass membrane protein</topology>
    </subcellularLocation>
</comment>
<comment type="similarity">
    <text evidence="1">Belongs to the ArnF family.</text>
</comment>
<reference key="1">
    <citation type="journal article" date="2011" name="J. Bacteriol.">
        <title>Comparative genomics of 28 Salmonella enterica isolates: evidence for CRISPR-mediated adaptive sublineage evolution.</title>
        <authorList>
            <person name="Fricke W.F."/>
            <person name="Mammel M.K."/>
            <person name="McDermott P.F."/>
            <person name="Tartera C."/>
            <person name="White D.G."/>
            <person name="Leclerc J.E."/>
            <person name="Ravel J."/>
            <person name="Cebula T.A."/>
        </authorList>
    </citation>
    <scope>NUCLEOTIDE SEQUENCE [LARGE SCALE GENOMIC DNA]</scope>
    <source>
        <strain>CT_02021853</strain>
    </source>
</reference>
<dbReference type="EMBL" id="CP001144">
    <property type="protein sequence ID" value="ACH75505.1"/>
    <property type="molecule type" value="Genomic_DNA"/>
</dbReference>
<dbReference type="RefSeq" id="WP_000538696.1">
    <property type="nucleotide sequence ID" value="NC_011205.1"/>
</dbReference>
<dbReference type="KEGG" id="sed:SeD_A2647"/>
<dbReference type="HOGENOM" id="CLU_131462_1_0_6"/>
<dbReference type="UniPathway" id="UPA00030"/>
<dbReference type="Proteomes" id="UP000008322">
    <property type="component" value="Chromosome"/>
</dbReference>
<dbReference type="GO" id="GO:0005886">
    <property type="term" value="C:plasma membrane"/>
    <property type="evidence" value="ECO:0007669"/>
    <property type="project" value="UniProtKB-SubCell"/>
</dbReference>
<dbReference type="GO" id="GO:1901505">
    <property type="term" value="F:carbohydrate derivative transmembrane transporter activity"/>
    <property type="evidence" value="ECO:0007669"/>
    <property type="project" value="InterPro"/>
</dbReference>
<dbReference type="GO" id="GO:0009245">
    <property type="term" value="P:lipid A biosynthetic process"/>
    <property type="evidence" value="ECO:0007669"/>
    <property type="project" value="UniProtKB-UniRule"/>
</dbReference>
<dbReference type="GO" id="GO:0009103">
    <property type="term" value="P:lipopolysaccharide biosynthetic process"/>
    <property type="evidence" value="ECO:0007669"/>
    <property type="project" value="UniProtKB-UniRule"/>
</dbReference>
<dbReference type="Gene3D" id="1.10.3730.20">
    <property type="match status" value="1"/>
</dbReference>
<dbReference type="HAMAP" id="MF_00538">
    <property type="entry name" value="Flippase_ArnF"/>
    <property type="match status" value="1"/>
</dbReference>
<dbReference type="InterPro" id="IPR022832">
    <property type="entry name" value="Flippase_ArnF"/>
</dbReference>
<dbReference type="InterPro" id="IPR000390">
    <property type="entry name" value="Small_drug/metabolite_transptr"/>
</dbReference>
<dbReference type="NCBIfam" id="NF002816">
    <property type="entry name" value="PRK02971.1-2"/>
    <property type="match status" value="1"/>
</dbReference>
<dbReference type="PANTHER" id="PTHR30561:SF9">
    <property type="entry name" value="4-AMINO-4-DEOXY-L-ARABINOSE-PHOSPHOUNDECAPRENOL FLIPPASE SUBUNIT ARNF-RELATED"/>
    <property type="match status" value="1"/>
</dbReference>
<dbReference type="PANTHER" id="PTHR30561">
    <property type="entry name" value="SMR FAMILY PROTON-DEPENDENT DRUG EFFLUX TRANSPORTER SUGE"/>
    <property type="match status" value="1"/>
</dbReference>
<accession>B5FPE2</accession>
<name>ARNF_SALDC</name>